<keyword id="KW-0963">Cytoplasm</keyword>
<keyword id="KW-0690">Ribosome biogenesis</keyword>
<name>RIMP_BARQU</name>
<protein>
    <recommendedName>
        <fullName evidence="1">Ribosome maturation factor RimP</fullName>
    </recommendedName>
</protein>
<accession>Q6G0N9</accession>
<dbReference type="EMBL" id="BX897700">
    <property type="protein sequence ID" value="CAF25709.1"/>
    <property type="molecule type" value="Genomic_DNA"/>
</dbReference>
<dbReference type="RefSeq" id="WP_011179024.1">
    <property type="nucleotide sequence ID" value="NC_005955.1"/>
</dbReference>
<dbReference type="SMR" id="Q6G0N9"/>
<dbReference type="KEGG" id="bqu:BQ02060"/>
<dbReference type="eggNOG" id="COG0779">
    <property type="taxonomic scope" value="Bacteria"/>
</dbReference>
<dbReference type="HOGENOM" id="CLU_070525_0_1_5"/>
<dbReference type="OrthoDB" id="9805006at2"/>
<dbReference type="Proteomes" id="UP000000597">
    <property type="component" value="Chromosome"/>
</dbReference>
<dbReference type="GO" id="GO:0005829">
    <property type="term" value="C:cytosol"/>
    <property type="evidence" value="ECO:0007669"/>
    <property type="project" value="TreeGrafter"/>
</dbReference>
<dbReference type="GO" id="GO:0000028">
    <property type="term" value="P:ribosomal small subunit assembly"/>
    <property type="evidence" value="ECO:0007669"/>
    <property type="project" value="TreeGrafter"/>
</dbReference>
<dbReference type="GO" id="GO:0006412">
    <property type="term" value="P:translation"/>
    <property type="evidence" value="ECO:0007669"/>
    <property type="project" value="TreeGrafter"/>
</dbReference>
<dbReference type="CDD" id="cd01734">
    <property type="entry name" value="YlxS_C"/>
    <property type="match status" value="1"/>
</dbReference>
<dbReference type="Gene3D" id="2.30.30.180">
    <property type="entry name" value="Ribosome maturation factor RimP, C-terminal domain"/>
    <property type="match status" value="1"/>
</dbReference>
<dbReference type="Gene3D" id="3.30.300.70">
    <property type="entry name" value="RimP-like superfamily, N-terminal"/>
    <property type="match status" value="1"/>
</dbReference>
<dbReference type="HAMAP" id="MF_01077">
    <property type="entry name" value="RimP"/>
    <property type="match status" value="1"/>
</dbReference>
<dbReference type="InterPro" id="IPR003728">
    <property type="entry name" value="Ribosome_maturation_RimP"/>
</dbReference>
<dbReference type="InterPro" id="IPR028998">
    <property type="entry name" value="RimP_C"/>
</dbReference>
<dbReference type="InterPro" id="IPR036847">
    <property type="entry name" value="RimP_C_sf"/>
</dbReference>
<dbReference type="InterPro" id="IPR028989">
    <property type="entry name" value="RimP_N"/>
</dbReference>
<dbReference type="InterPro" id="IPR035956">
    <property type="entry name" value="RimP_N_sf"/>
</dbReference>
<dbReference type="NCBIfam" id="NF000932">
    <property type="entry name" value="PRK00092.2-5"/>
    <property type="match status" value="1"/>
</dbReference>
<dbReference type="PANTHER" id="PTHR33867">
    <property type="entry name" value="RIBOSOME MATURATION FACTOR RIMP"/>
    <property type="match status" value="1"/>
</dbReference>
<dbReference type="PANTHER" id="PTHR33867:SF1">
    <property type="entry name" value="RIBOSOME MATURATION FACTOR RIMP"/>
    <property type="match status" value="1"/>
</dbReference>
<dbReference type="Pfam" id="PF17384">
    <property type="entry name" value="DUF150_C"/>
    <property type="match status" value="1"/>
</dbReference>
<dbReference type="Pfam" id="PF02576">
    <property type="entry name" value="RimP_N"/>
    <property type="match status" value="1"/>
</dbReference>
<dbReference type="SUPFAM" id="SSF74942">
    <property type="entry name" value="YhbC-like, C-terminal domain"/>
    <property type="match status" value="1"/>
</dbReference>
<dbReference type="SUPFAM" id="SSF75420">
    <property type="entry name" value="YhbC-like, N-terminal domain"/>
    <property type="match status" value="1"/>
</dbReference>
<sequence length="216" mass="24709">MKLTWIKCMRKTEKMNDIDEPRLFEETGIEAFVAALVIPLLKPLDFRLVRVKLLGQNGLTLQIMVERADGSMTIEDCETVSRTVSHLLDVQNVIERKYHLEISSPGIDRPLVRKSDFFHWQGHIAKIETKITIDGRKKFRGILANITQEGLTLNTDKAAYGEAMYIAIPFDNIIDAHLVLTDELIRNALKKNKDLSQQFISEDNPNVSKQLSNYKN</sequence>
<evidence type="ECO:0000255" key="1">
    <source>
        <dbReference type="HAMAP-Rule" id="MF_01077"/>
    </source>
</evidence>
<gene>
    <name evidence="1" type="primary">rimP</name>
    <name type="ordered locus">BQ02060</name>
</gene>
<organism>
    <name type="scientific">Bartonella quintana (strain Toulouse)</name>
    <name type="common">Rochalimaea quintana</name>
    <dbReference type="NCBI Taxonomy" id="283165"/>
    <lineage>
        <taxon>Bacteria</taxon>
        <taxon>Pseudomonadati</taxon>
        <taxon>Pseudomonadota</taxon>
        <taxon>Alphaproteobacteria</taxon>
        <taxon>Hyphomicrobiales</taxon>
        <taxon>Bartonellaceae</taxon>
        <taxon>Bartonella</taxon>
    </lineage>
</organism>
<comment type="function">
    <text evidence="1">Required for maturation of 30S ribosomal subunits.</text>
</comment>
<comment type="subcellular location">
    <subcellularLocation>
        <location evidence="1">Cytoplasm</location>
    </subcellularLocation>
</comment>
<comment type="similarity">
    <text evidence="1">Belongs to the RimP family.</text>
</comment>
<reference key="1">
    <citation type="journal article" date="2004" name="Proc. Natl. Acad. Sci. U.S.A.">
        <title>The louse-borne human pathogen Bartonella quintana is a genomic derivative of the zoonotic agent Bartonella henselae.</title>
        <authorList>
            <person name="Alsmark U.C.M."/>
            <person name="Frank A.C."/>
            <person name="Karlberg E.O."/>
            <person name="Legault B.-A."/>
            <person name="Ardell D.H."/>
            <person name="Canbaeck B."/>
            <person name="Eriksson A.-S."/>
            <person name="Naeslund A.K."/>
            <person name="Handley S.A."/>
            <person name="Huvet M."/>
            <person name="La Scola B."/>
            <person name="Holmberg M."/>
            <person name="Andersson S.G.E."/>
        </authorList>
    </citation>
    <scope>NUCLEOTIDE SEQUENCE [LARGE SCALE GENOMIC DNA]</scope>
    <source>
        <strain>Toulouse</strain>
    </source>
</reference>
<proteinExistence type="inferred from homology"/>
<feature type="chain" id="PRO_0000181847" description="Ribosome maturation factor RimP">
    <location>
        <begin position="1"/>
        <end position="216"/>
    </location>
</feature>